<feature type="chain" id="PRO_1000083768" description="Nascent polypeptide-associated complex protein">
    <location>
        <begin position="1"/>
        <end position="126"/>
    </location>
</feature>
<feature type="domain" description="NAC-A/B" evidence="1">
    <location>
        <begin position="10"/>
        <end position="77"/>
    </location>
</feature>
<gene>
    <name evidence="1" type="primary">nac</name>
    <name type="ordered locus">MmarC7_1293</name>
</gene>
<organism>
    <name type="scientific">Methanococcus maripaludis (strain C7 / ATCC BAA-1331)</name>
    <dbReference type="NCBI Taxonomy" id="426368"/>
    <lineage>
        <taxon>Archaea</taxon>
        <taxon>Methanobacteriati</taxon>
        <taxon>Methanobacteriota</taxon>
        <taxon>Methanomada group</taxon>
        <taxon>Methanococci</taxon>
        <taxon>Methanococcales</taxon>
        <taxon>Methanococcaceae</taxon>
        <taxon>Methanococcus</taxon>
    </lineage>
</organism>
<dbReference type="EMBL" id="CP000745">
    <property type="protein sequence ID" value="ABR66356.1"/>
    <property type="molecule type" value="Genomic_DNA"/>
</dbReference>
<dbReference type="SMR" id="A6VIT0"/>
<dbReference type="STRING" id="426368.MmarC7_1293"/>
<dbReference type="KEGG" id="mmz:MmarC7_1293"/>
<dbReference type="eggNOG" id="arCOG04061">
    <property type="taxonomic scope" value="Archaea"/>
</dbReference>
<dbReference type="HOGENOM" id="CLU_146475_1_0_2"/>
<dbReference type="OrthoDB" id="53273at2157"/>
<dbReference type="GO" id="GO:0003723">
    <property type="term" value="F:RNA binding"/>
    <property type="evidence" value="ECO:0007669"/>
    <property type="project" value="UniProtKB-UniRule"/>
</dbReference>
<dbReference type="GO" id="GO:0015031">
    <property type="term" value="P:protein transport"/>
    <property type="evidence" value="ECO:0007669"/>
    <property type="project" value="UniProtKB-UniRule"/>
</dbReference>
<dbReference type="CDD" id="cd14359">
    <property type="entry name" value="UBA_AeNAC"/>
    <property type="match status" value="1"/>
</dbReference>
<dbReference type="Gene3D" id="1.10.8.10">
    <property type="entry name" value="DNA helicase RuvA subunit, C-terminal domain"/>
    <property type="match status" value="1"/>
</dbReference>
<dbReference type="Gene3D" id="2.20.70.30">
    <property type="entry name" value="Nascent polypeptide-associated complex domain"/>
    <property type="match status" value="1"/>
</dbReference>
<dbReference type="HAMAP" id="MF_00814">
    <property type="entry name" value="NAC_arch"/>
    <property type="match status" value="1"/>
</dbReference>
<dbReference type="InterPro" id="IPR044034">
    <property type="entry name" value="NAC-like_UBA"/>
</dbReference>
<dbReference type="InterPro" id="IPR038187">
    <property type="entry name" value="NAC_A/B_dom_sf"/>
</dbReference>
<dbReference type="InterPro" id="IPR005231">
    <property type="entry name" value="NAC_arc"/>
</dbReference>
<dbReference type="InterPro" id="IPR002715">
    <property type="entry name" value="Nas_poly-pep-assoc_cplx_dom"/>
</dbReference>
<dbReference type="InterPro" id="IPR009060">
    <property type="entry name" value="UBA-like_sf"/>
</dbReference>
<dbReference type="NCBIfam" id="TIGR00264">
    <property type="entry name" value="archaeal-type nascent polypeptide-associated complex protein"/>
    <property type="match status" value="1"/>
</dbReference>
<dbReference type="Pfam" id="PF01849">
    <property type="entry name" value="NAC"/>
    <property type="match status" value="1"/>
</dbReference>
<dbReference type="Pfam" id="PF19026">
    <property type="entry name" value="UBA_HYPK"/>
    <property type="match status" value="1"/>
</dbReference>
<dbReference type="SMART" id="SM01407">
    <property type="entry name" value="NAC"/>
    <property type="match status" value="1"/>
</dbReference>
<dbReference type="SUPFAM" id="SSF46934">
    <property type="entry name" value="UBA-like"/>
    <property type="match status" value="1"/>
</dbReference>
<dbReference type="PROSITE" id="PS51151">
    <property type="entry name" value="NAC_AB"/>
    <property type="match status" value="1"/>
</dbReference>
<accession>A6VIT0</accession>
<keyword id="KW-0653">Protein transport</keyword>
<keyword id="KW-0694">RNA-binding</keyword>
<keyword id="KW-0813">Transport</keyword>
<proteinExistence type="inferred from homology"/>
<name>NAC_METM7</name>
<sequence>MFPGGGKFNPRMMKQMQKMMKDFGMDAEDLKAVKVTIELEDQLLVFEKPKVQVMDMLGNKTYSITGKAKKVAKEEEKIEDVEVKVEVTEEDIEMVSSQCGVSKEEAKKALEEANGDLAEAILKLGN</sequence>
<protein>
    <recommendedName>
        <fullName evidence="1">Nascent polypeptide-associated complex protein</fullName>
    </recommendedName>
</protein>
<reference key="1">
    <citation type="submission" date="2007-06" db="EMBL/GenBank/DDBJ databases">
        <title>Complete sequence of Methanococcus maripaludis C7.</title>
        <authorList>
            <consortium name="US DOE Joint Genome Institute"/>
            <person name="Copeland A."/>
            <person name="Lucas S."/>
            <person name="Lapidus A."/>
            <person name="Barry K."/>
            <person name="Glavina del Rio T."/>
            <person name="Dalin E."/>
            <person name="Tice H."/>
            <person name="Pitluck S."/>
            <person name="Clum A."/>
            <person name="Schmutz J."/>
            <person name="Larimer F."/>
            <person name="Land M."/>
            <person name="Hauser L."/>
            <person name="Kyrpides N."/>
            <person name="Anderson I."/>
            <person name="Sieprawska-Lupa M."/>
            <person name="Whitman W.B."/>
            <person name="Richardson P."/>
        </authorList>
    </citation>
    <scope>NUCLEOTIDE SEQUENCE [LARGE SCALE GENOMIC DNA]</scope>
    <source>
        <strain>C7 / ATCC BAA-1331</strain>
    </source>
</reference>
<comment type="function">
    <text evidence="1">Contacts the emerging nascent chain on the ribosome.</text>
</comment>
<comment type="subunit">
    <text evidence="1">Homodimer. Interacts with the ribosome. Binds ribosomal RNA.</text>
</comment>
<comment type="similarity">
    <text evidence="1">Belongs to the NAC-alpha family.</text>
</comment>
<evidence type="ECO:0000255" key="1">
    <source>
        <dbReference type="HAMAP-Rule" id="MF_00814"/>
    </source>
</evidence>